<proteinExistence type="inferred from homology"/>
<dbReference type="EC" id="3.6.1.31" evidence="1"/>
<dbReference type="EMBL" id="AP006618">
    <property type="protein sequence ID" value="BAD58033.1"/>
    <property type="molecule type" value="Genomic_DNA"/>
</dbReference>
<dbReference type="RefSeq" id="WP_011209718.1">
    <property type="nucleotide sequence ID" value="NC_006361.1"/>
</dbReference>
<dbReference type="SMR" id="Q5YUV8"/>
<dbReference type="STRING" id="247156.NFA_31860"/>
<dbReference type="GeneID" id="61133901"/>
<dbReference type="KEGG" id="nfa:NFA_31860"/>
<dbReference type="eggNOG" id="COG0140">
    <property type="taxonomic scope" value="Bacteria"/>
</dbReference>
<dbReference type="HOGENOM" id="CLU_123337_2_1_11"/>
<dbReference type="OrthoDB" id="3212875at2"/>
<dbReference type="UniPathway" id="UPA00031">
    <property type="reaction ID" value="UER00007"/>
</dbReference>
<dbReference type="Proteomes" id="UP000006820">
    <property type="component" value="Chromosome"/>
</dbReference>
<dbReference type="GO" id="GO:0005737">
    <property type="term" value="C:cytoplasm"/>
    <property type="evidence" value="ECO:0007669"/>
    <property type="project" value="UniProtKB-SubCell"/>
</dbReference>
<dbReference type="GO" id="GO:0005524">
    <property type="term" value="F:ATP binding"/>
    <property type="evidence" value="ECO:0007669"/>
    <property type="project" value="UniProtKB-KW"/>
</dbReference>
<dbReference type="GO" id="GO:0004636">
    <property type="term" value="F:phosphoribosyl-ATP diphosphatase activity"/>
    <property type="evidence" value="ECO:0007669"/>
    <property type="project" value="UniProtKB-UniRule"/>
</dbReference>
<dbReference type="GO" id="GO:0000105">
    <property type="term" value="P:L-histidine biosynthetic process"/>
    <property type="evidence" value="ECO:0007669"/>
    <property type="project" value="UniProtKB-UniRule"/>
</dbReference>
<dbReference type="CDD" id="cd11547">
    <property type="entry name" value="NTP-PPase_HisE"/>
    <property type="match status" value="1"/>
</dbReference>
<dbReference type="Gene3D" id="1.10.287.1080">
    <property type="entry name" value="MazG-like"/>
    <property type="match status" value="1"/>
</dbReference>
<dbReference type="HAMAP" id="MF_01020">
    <property type="entry name" value="HisE"/>
    <property type="match status" value="1"/>
</dbReference>
<dbReference type="InterPro" id="IPR008179">
    <property type="entry name" value="HisE"/>
</dbReference>
<dbReference type="InterPro" id="IPR021130">
    <property type="entry name" value="PRib-ATP_PPHydrolase-like"/>
</dbReference>
<dbReference type="NCBIfam" id="TIGR03188">
    <property type="entry name" value="histidine_hisI"/>
    <property type="match status" value="1"/>
</dbReference>
<dbReference type="NCBIfam" id="NF001610">
    <property type="entry name" value="PRK00400.1-1"/>
    <property type="match status" value="1"/>
</dbReference>
<dbReference type="PANTHER" id="PTHR42945">
    <property type="entry name" value="HISTIDINE BIOSYNTHESIS BIFUNCTIONAL PROTEIN"/>
    <property type="match status" value="1"/>
</dbReference>
<dbReference type="PANTHER" id="PTHR42945:SF1">
    <property type="entry name" value="HISTIDINE BIOSYNTHESIS BIFUNCTIONAL PROTEIN HIS7"/>
    <property type="match status" value="1"/>
</dbReference>
<dbReference type="Pfam" id="PF01503">
    <property type="entry name" value="PRA-PH"/>
    <property type="match status" value="1"/>
</dbReference>
<dbReference type="SUPFAM" id="SSF101386">
    <property type="entry name" value="all-alpha NTP pyrophosphatases"/>
    <property type="match status" value="1"/>
</dbReference>
<evidence type="ECO:0000255" key="1">
    <source>
        <dbReference type="HAMAP-Rule" id="MF_01020"/>
    </source>
</evidence>
<accession>Q5YUV8</accession>
<organism>
    <name type="scientific">Nocardia farcinica (strain IFM 10152)</name>
    <dbReference type="NCBI Taxonomy" id="247156"/>
    <lineage>
        <taxon>Bacteria</taxon>
        <taxon>Bacillati</taxon>
        <taxon>Actinomycetota</taxon>
        <taxon>Actinomycetes</taxon>
        <taxon>Mycobacteriales</taxon>
        <taxon>Nocardiaceae</taxon>
        <taxon>Nocardia</taxon>
    </lineage>
</organism>
<gene>
    <name evidence="1" type="primary">hisE</name>
    <name type="ordered locus">NFA_31860</name>
</gene>
<comment type="catalytic activity">
    <reaction evidence="1">
        <text>1-(5-phospho-beta-D-ribosyl)-ATP + H2O = 1-(5-phospho-beta-D-ribosyl)-5'-AMP + diphosphate + H(+)</text>
        <dbReference type="Rhea" id="RHEA:22828"/>
        <dbReference type="ChEBI" id="CHEBI:15377"/>
        <dbReference type="ChEBI" id="CHEBI:15378"/>
        <dbReference type="ChEBI" id="CHEBI:33019"/>
        <dbReference type="ChEBI" id="CHEBI:59457"/>
        <dbReference type="ChEBI" id="CHEBI:73183"/>
        <dbReference type="EC" id="3.6.1.31"/>
    </reaction>
</comment>
<comment type="pathway">
    <text evidence="1">Amino-acid biosynthesis; L-histidine biosynthesis; L-histidine from 5-phospho-alpha-D-ribose 1-diphosphate: step 2/9.</text>
</comment>
<comment type="subcellular location">
    <subcellularLocation>
        <location evidence="1">Cytoplasm</location>
    </subcellularLocation>
</comment>
<comment type="similarity">
    <text evidence="1">Belongs to the PRA-PH family.</text>
</comment>
<reference key="1">
    <citation type="journal article" date="2004" name="Proc. Natl. Acad. Sci. U.S.A.">
        <title>The complete genomic sequence of Nocardia farcinica IFM 10152.</title>
        <authorList>
            <person name="Ishikawa J."/>
            <person name="Yamashita A."/>
            <person name="Mikami Y."/>
            <person name="Hoshino Y."/>
            <person name="Kurita H."/>
            <person name="Hotta K."/>
            <person name="Shiba T."/>
            <person name="Hattori M."/>
        </authorList>
    </citation>
    <scope>NUCLEOTIDE SEQUENCE [LARGE SCALE GENOMIC DNA]</scope>
    <source>
        <strain>IFM 10152</strain>
    </source>
</reference>
<protein>
    <recommendedName>
        <fullName evidence="1">Phosphoribosyl-ATP pyrophosphatase</fullName>
        <shortName evidence="1">PRA-PH</shortName>
        <ecNumber evidence="1">3.6.1.31</ecNumber>
    </recommendedName>
</protein>
<name>HIS2_NOCFA</name>
<sequence>MKTFETLFAELQDRAATRPEGSGTVAALDAGVHAQGKKVLEEAGEVWLAAEHESDESLAEEISQLLYWVQVLMVGRGLKLEDVYRHL</sequence>
<feature type="chain" id="PRO_0000230183" description="Phosphoribosyl-ATP pyrophosphatase">
    <location>
        <begin position="1"/>
        <end position="87"/>
    </location>
</feature>
<keyword id="KW-0028">Amino-acid biosynthesis</keyword>
<keyword id="KW-0067">ATP-binding</keyword>
<keyword id="KW-0963">Cytoplasm</keyword>
<keyword id="KW-0368">Histidine biosynthesis</keyword>
<keyword id="KW-0378">Hydrolase</keyword>
<keyword id="KW-0547">Nucleotide-binding</keyword>
<keyword id="KW-1185">Reference proteome</keyword>